<gene>
    <name evidence="5" type="primary">Mos</name>
</gene>
<dbReference type="EC" id="2.7.11.1"/>
<dbReference type="EMBL" id="J00372">
    <property type="protein sequence ID" value="AAB59724.1"/>
    <property type="status" value="ALT_SEQ"/>
    <property type="molecule type" value="Genomic_DNA"/>
</dbReference>
<dbReference type="EMBL" id="J00372">
    <property type="protein sequence ID" value="AAB59725.1"/>
    <property type="molecule type" value="Genomic_DNA"/>
</dbReference>
<dbReference type="EMBL" id="AL807387">
    <property type="status" value="NOT_ANNOTATED_CDS"/>
    <property type="molecule type" value="Genomic_DNA"/>
</dbReference>
<dbReference type="EMBL" id="BC137690">
    <property type="protein sequence ID" value="AAI37691.1"/>
    <property type="molecule type" value="mRNA"/>
</dbReference>
<dbReference type="CCDS" id="CCDS38685.1"/>
<dbReference type="PIR" id="A00645">
    <property type="entry name" value="TVMSM"/>
</dbReference>
<dbReference type="RefSeq" id="NP_064405.2">
    <property type="nucleotide sequence ID" value="NM_020021.3"/>
</dbReference>
<dbReference type="SMR" id="P00536"/>
<dbReference type="FunCoup" id="P00536">
    <property type="interactions" value="1018"/>
</dbReference>
<dbReference type="IntAct" id="P00536">
    <property type="interactions" value="1"/>
</dbReference>
<dbReference type="STRING" id="10090.ENSMUSP00000100789"/>
<dbReference type="iPTMnet" id="P00536"/>
<dbReference type="PhosphoSitePlus" id="P00536"/>
<dbReference type="PaxDb" id="10090-ENSMUSP00000100789"/>
<dbReference type="Antibodypedia" id="24550">
    <property type="antibodies" value="288 antibodies from 27 providers"/>
</dbReference>
<dbReference type="DNASU" id="17451"/>
<dbReference type="Ensembl" id="ENSMUST00000105158.2">
    <property type="protein sequence ID" value="ENSMUSP00000100789.2"/>
    <property type="gene ID" value="ENSMUSG00000078365.6"/>
</dbReference>
<dbReference type="GeneID" id="17451"/>
<dbReference type="KEGG" id="mmu:17451"/>
<dbReference type="UCSC" id="uc008rwo.1">
    <property type="organism name" value="mouse"/>
</dbReference>
<dbReference type="AGR" id="MGI:97052"/>
<dbReference type="CTD" id="4342"/>
<dbReference type="MGI" id="MGI:97052">
    <property type="gene designation" value="Mos"/>
</dbReference>
<dbReference type="VEuPathDB" id="HostDB:ENSMUSG00000078365"/>
<dbReference type="eggNOG" id="KOG0192">
    <property type="taxonomic scope" value="Eukaryota"/>
</dbReference>
<dbReference type="GeneTree" id="ENSGT00940000160233"/>
<dbReference type="InParanoid" id="P00536"/>
<dbReference type="OMA" id="LSWCSID"/>
<dbReference type="OrthoDB" id="4062651at2759"/>
<dbReference type="BRENDA" id="2.7.10.2">
    <property type="organism ID" value="3474"/>
</dbReference>
<dbReference type="BioGRID-ORCS" id="17451">
    <property type="hits" value="2 hits in 64 CRISPR screens"/>
</dbReference>
<dbReference type="CD-CODE" id="01CA17F3">
    <property type="entry name" value="Centrosome"/>
</dbReference>
<dbReference type="ChiTaRS" id="Mocos">
    <property type="organism name" value="mouse"/>
</dbReference>
<dbReference type="PRO" id="PR:P00536"/>
<dbReference type="Proteomes" id="UP000000589">
    <property type="component" value="Chromosome 4"/>
</dbReference>
<dbReference type="RNAct" id="P00536">
    <property type="molecule type" value="protein"/>
</dbReference>
<dbReference type="Bgee" id="ENSMUSG00000078365">
    <property type="expression patterns" value="Expressed in primary oocyte and 12 other cell types or tissues"/>
</dbReference>
<dbReference type="GO" id="GO:0005737">
    <property type="term" value="C:cytoplasm"/>
    <property type="evidence" value="ECO:0000314"/>
    <property type="project" value="UniProtKB"/>
</dbReference>
<dbReference type="GO" id="GO:0005524">
    <property type="term" value="F:ATP binding"/>
    <property type="evidence" value="ECO:0007669"/>
    <property type="project" value="UniProtKB-KW"/>
</dbReference>
<dbReference type="GO" id="GO:0004709">
    <property type="term" value="F:MAP kinase kinase kinase activity"/>
    <property type="evidence" value="ECO:0000250"/>
    <property type="project" value="UniProtKB"/>
</dbReference>
<dbReference type="GO" id="GO:0106310">
    <property type="term" value="F:protein serine kinase activity"/>
    <property type="evidence" value="ECO:0007669"/>
    <property type="project" value="RHEA"/>
</dbReference>
<dbReference type="GO" id="GO:0004674">
    <property type="term" value="F:protein serine/threonine kinase activity"/>
    <property type="evidence" value="ECO:0000250"/>
    <property type="project" value="UniProtKB"/>
</dbReference>
<dbReference type="GO" id="GO:0006325">
    <property type="term" value="P:chromatin organization"/>
    <property type="evidence" value="ECO:0000315"/>
    <property type="project" value="UniProtKB"/>
</dbReference>
<dbReference type="GO" id="GO:0051296">
    <property type="term" value="P:establishment of meiotic spindle orientation"/>
    <property type="evidence" value="ECO:0000315"/>
    <property type="project" value="UniProtKB"/>
</dbReference>
<dbReference type="GO" id="GO:0000165">
    <property type="term" value="P:MAPK cascade"/>
    <property type="evidence" value="ECO:0000250"/>
    <property type="project" value="UniProtKB"/>
</dbReference>
<dbReference type="GO" id="GO:0000212">
    <property type="term" value="P:meiotic spindle organization"/>
    <property type="evidence" value="ECO:0000315"/>
    <property type="project" value="UniProtKB"/>
</dbReference>
<dbReference type="GO" id="GO:1902103">
    <property type="term" value="P:negative regulation of metaphase/anaphase transition of meiotic cell cycle"/>
    <property type="evidence" value="ECO:0000315"/>
    <property type="project" value="UniProtKB"/>
</dbReference>
<dbReference type="GO" id="GO:0001556">
    <property type="term" value="P:oocyte maturation"/>
    <property type="evidence" value="ECO:0000250"/>
    <property type="project" value="UniProtKB"/>
</dbReference>
<dbReference type="GO" id="GO:0070374">
    <property type="term" value="P:positive regulation of ERK1 and ERK2 cascade"/>
    <property type="evidence" value="ECO:0000250"/>
    <property type="project" value="UniProtKB"/>
</dbReference>
<dbReference type="GO" id="GO:0043410">
    <property type="term" value="P:positive regulation of MAPK cascade"/>
    <property type="evidence" value="ECO:0000315"/>
    <property type="project" value="UniProtKB"/>
</dbReference>
<dbReference type="GO" id="GO:0040020">
    <property type="term" value="P:regulation of meiotic nuclear division"/>
    <property type="evidence" value="ECO:0000316"/>
    <property type="project" value="MGI"/>
</dbReference>
<dbReference type="CDD" id="cd13979">
    <property type="entry name" value="STKc_Mos"/>
    <property type="match status" value="1"/>
</dbReference>
<dbReference type="FunFam" id="1.10.510.10:FF:000490">
    <property type="entry name" value="Proto-oncogene serine/threonine-protein kinase mos"/>
    <property type="match status" value="1"/>
</dbReference>
<dbReference type="FunFam" id="3.30.200.20:FF:000316">
    <property type="entry name" value="Proto-oncogene serine/threonine-protein kinase mos"/>
    <property type="match status" value="1"/>
</dbReference>
<dbReference type="Gene3D" id="3.30.200.20">
    <property type="entry name" value="Phosphorylase Kinase, domain 1"/>
    <property type="match status" value="1"/>
</dbReference>
<dbReference type="Gene3D" id="1.10.510.10">
    <property type="entry name" value="Transferase(Phosphotransferase) domain 1"/>
    <property type="match status" value="1"/>
</dbReference>
<dbReference type="InterPro" id="IPR011009">
    <property type="entry name" value="Kinase-like_dom_sf"/>
</dbReference>
<dbReference type="InterPro" id="IPR000719">
    <property type="entry name" value="Prot_kinase_dom"/>
</dbReference>
<dbReference type="InterPro" id="IPR017441">
    <property type="entry name" value="Protein_kinase_ATP_BS"/>
</dbReference>
<dbReference type="InterPro" id="IPR008271">
    <property type="entry name" value="Ser/Thr_kinase_AS"/>
</dbReference>
<dbReference type="InterPro" id="IPR051681">
    <property type="entry name" value="Ser/Thr_Kinases-Pseudokinases"/>
</dbReference>
<dbReference type="PANTHER" id="PTHR44329">
    <property type="entry name" value="SERINE/THREONINE-PROTEIN KINASE TNNI3K-RELATED"/>
    <property type="match status" value="1"/>
</dbReference>
<dbReference type="PANTHER" id="PTHR44329:SF285">
    <property type="entry name" value="V-MOS MOLONEY MURINE SARCOMA VIRAL ONCO HOMOLOG"/>
    <property type="match status" value="1"/>
</dbReference>
<dbReference type="Pfam" id="PF00069">
    <property type="entry name" value="Pkinase"/>
    <property type="match status" value="1"/>
</dbReference>
<dbReference type="SMART" id="SM00220">
    <property type="entry name" value="S_TKc"/>
    <property type="match status" value="1"/>
</dbReference>
<dbReference type="SUPFAM" id="SSF56112">
    <property type="entry name" value="Protein kinase-like (PK-like)"/>
    <property type="match status" value="1"/>
</dbReference>
<dbReference type="PROSITE" id="PS00107">
    <property type="entry name" value="PROTEIN_KINASE_ATP"/>
    <property type="match status" value="1"/>
</dbReference>
<dbReference type="PROSITE" id="PS50011">
    <property type="entry name" value="PROTEIN_KINASE_DOM"/>
    <property type="match status" value="1"/>
</dbReference>
<dbReference type="PROSITE" id="PS00108">
    <property type="entry name" value="PROTEIN_KINASE_ST"/>
    <property type="match status" value="1"/>
</dbReference>
<sequence length="343" mass="37886">MPSPLSLCRYLPRELSPSVDSRSCSIPLVAPRKAGKLFLGTTPPRAPGLPRRLAWFSIDWEQVCLMHRLGSGGFGSVYKATYHGVPVAIKQVNKCTKDLRASQRSFWAELNIARLRHDNIVRVVAASTRTPEDSNSLGTIIMEFGGNVTLHQVIYGATRSPEPLSCREQLSLGKCLKYSLDVVNGLLFLHSQSILHLDLKPANILISEQDVCKISDFGCSQKLQDLRCRQASPHHIGGTYTHQAPEILKGEIATPKADIYSFGITLWQMTTREVPYSGEPQYVQYAVVAYNLRPSLAGAVFTASLTGKTLQNIIQSCWEARALQRPGAELLQRDLKAFRGALG</sequence>
<comment type="function">
    <text evidence="1">Serine/threonine kinase involved in the regulation of MAPK signaling. Is an activator of the ERK1/2 signaling cascade playing an essential role in the stimulation of oocyte maturation.</text>
</comment>
<comment type="catalytic activity">
    <reaction>
        <text>L-seryl-[protein] + ATP = O-phospho-L-seryl-[protein] + ADP + H(+)</text>
        <dbReference type="Rhea" id="RHEA:17989"/>
        <dbReference type="Rhea" id="RHEA-COMP:9863"/>
        <dbReference type="Rhea" id="RHEA-COMP:11604"/>
        <dbReference type="ChEBI" id="CHEBI:15378"/>
        <dbReference type="ChEBI" id="CHEBI:29999"/>
        <dbReference type="ChEBI" id="CHEBI:30616"/>
        <dbReference type="ChEBI" id="CHEBI:83421"/>
        <dbReference type="ChEBI" id="CHEBI:456216"/>
        <dbReference type="EC" id="2.7.11.1"/>
    </reaction>
</comment>
<comment type="catalytic activity">
    <reaction>
        <text>L-threonyl-[protein] + ATP = O-phospho-L-threonyl-[protein] + ADP + H(+)</text>
        <dbReference type="Rhea" id="RHEA:46608"/>
        <dbReference type="Rhea" id="RHEA-COMP:11060"/>
        <dbReference type="Rhea" id="RHEA-COMP:11605"/>
        <dbReference type="ChEBI" id="CHEBI:15378"/>
        <dbReference type="ChEBI" id="CHEBI:30013"/>
        <dbReference type="ChEBI" id="CHEBI:30616"/>
        <dbReference type="ChEBI" id="CHEBI:61977"/>
        <dbReference type="ChEBI" id="CHEBI:456216"/>
        <dbReference type="EC" id="2.7.11.1"/>
    </reaction>
</comment>
<comment type="subunit">
    <text evidence="1">Interacts with MAP2K1/MEK1.</text>
</comment>
<comment type="subcellular location">
    <subcellularLocation>
        <location evidence="1">Cytoplasm</location>
    </subcellularLocation>
</comment>
<comment type="similarity">
    <text evidence="2">Belongs to the protein kinase superfamily. Ser/Thr protein kinase family.</text>
</comment>
<comment type="sequence caution" evidence="4">
    <conflict type="erroneous gene model prediction">
        <sequence resource="EMBL-CDS" id="AAB59724"/>
    </conflict>
</comment>
<organism>
    <name type="scientific">Mus musculus</name>
    <name type="common">Mouse</name>
    <dbReference type="NCBI Taxonomy" id="10090"/>
    <lineage>
        <taxon>Eukaryota</taxon>
        <taxon>Metazoa</taxon>
        <taxon>Chordata</taxon>
        <taxon>Craniata</taxon>
        <taxon>Vertebrata</taxon>
        <taxon>Euteleostomi</taxon>
        <taxon>Mammalia</taxon>
        <taxon>Eutheria</taxon>
        <taxon>Euarchontoglires</taxon>
        <taxon>Glires</taxon>
        <taxon>Rodentia</taxon>
        <taxon>Myomorpha</taxon>
        <taxon>Muroidea</taxon>
        <taxon>Muridae</taxon>
        <taxon>Murinae</taxon>
        <taxon>Mus</taxon>
        <taxon>Mus</taxon>
    </lineage>
</organism>
<keyword id="KW-0067">ATP-binding</keyword>
<keyword id="KW-0963">Cytoplasm</keyword>
<keyword id="KW-0418">Kinase</keyword>
<keyword id="KW-0547">Nucleotide-binding</keyword>
<keyword id="KW-0656">Proto-oncogene</keyword>
<keyword id="KW-1185">Reference proteome</keyword>
<keyword id="KW-0723">Serine/threonine-protein kinase</keyword>
<keyword id="KW-0808">Transferase</keyword>
<feature type="chain" id="PRO_0000086345" description="Proto-oncogene serine/threonine-protein kinase mos">
    <location>
        <begin position="1"/>
        <end position="343"/>
    </location>
</feature>
<feature type="domain" description="Protein kinase" evidence="2">
    <location>
        <begin position="63"/>
        <end position="339"/>
    </location>
</feature>
<feature type="active site" description="Proton acceptor" evidence="2 3">
    <location>
        <position position="198"/>
    </location>
</feature>
<feature type="binding site" evidence="2">
    <location>
        <begin position="69"/>
        <end position="77"/>
    </location>
    <ligand>
        <name>ATP</name>
        <dbReference type="ChEBI" id="CHEBI:30616"/>
    </ligand>
</feature>
<feature type="binding site" evidence="2">
    <location>
        <position position="90"/>
    </location>
    <ligand>
        <name>ATP</name>
        <dbReference type="ChEBI" id="CHEBI:30616"/>
    </ligand>
</feature>
<feature type="sequence conflict" description="In Ref. 1; AAB59724/AAB59725." evidence="4" ref="1">
    <original>D</original>
    <variation>V</variation>
    <location>
        <position position="225"/>
    </location>
</feature>
<accession>P00536</accession>
<accession>E9PV67</accession>
<accession>F6UHW1</accession>
<accession>Q61886</accession>
<accession>Q61887</accession>
<accession>Q78EH5</accession>
<reference key="1">
    <citation type="journal article" date="1981" name="Cell">
        <title>Nucleotide sequence of the genome of a murine sarcoma virus.</title>
        <authorList>
            <person name="van Beveren C."/>
            <person name="van Straaten F."/>
            <person name="Galleshaw J.A."/>
            <person name="Verma I.M."/>
        </authorList>
    </citation>
    <scope>NUCLEOTIDE SEQUENCE [GENOMIC DNA]</scope>
</reference>
<reference key="2">
    <citation type="journal article" date="2009" name="PLoS Biol.">
        <title>Lineage-specific biology revealed by a finished genome assembly of the mouse.</title>
        <authorList>
            <person name="Church D.M."/>
            <person name="Goodstadt L."/>
            <person name="Hillier L.W."/>
            <person name="Zody M.C."/>
            <person name="Goldstein S."/>
            <person name="She X."/>
            <person name="Bult C.J."/>
            <person name="Agarwala R."/>
            <person name="Cherry J.L."/>
            <person name="DiCuccio M."/>
            <person name="Hlavina W."/>
            <person name="Kapustin Y."/>
            <person name="Meric P."/>
            <person name="Maglott D."/>
            <person name="Birtle Z."/>
            <person name="Marques A.C."/>
            <person name="Graves T."/>
            <person name="Zhou S."/>
            <person name="Teague B."/>
            <person name="Potamousis K."/>
            <person name="Churas C."/>
            <person name="Place M."/>
            <person name="Herschleb J."/>
            <person name="Runnheim R."/>
            <person name="Forrest D."/>
            <person name="Amos-Landgraf J."/>
            <person name="Schwartz D.C."/>
            <person name="Cheng Z."/>
            <person name="Lindblad-Toh K."/>
            <person name="Eichler E.E."/>
            <person name="Ponting C.P."/>
        </authorList>
    </citation>
    <scope>NUCLEOTIDE SEQUENCE [LARGE SCALE GENOMIC DNA]</scope>
    <source>
        <strain>C57BL/6J</strain>
    </source>
</reference>
<reference key="3">
    <citation type="journal article" date="2004" name="Genome Res.">
        <title>The status, quality, and expansion of the NIH full-length cDNA project: the Mammalian Gene Collection (MGC).</title>
        <authorList>
            <consortium name="The MGC Project Team"/>
        </authorList>
    </citation>
    <scope>NUCLEOTIDE SEQUENCE [LARGE SCALE MRNA]</scope>
    <source>
        <strain>C57BL/6J</strain>
        <tissue>Testis</tissue>
    </source>
</reference>
<reference key="4">
    <citation type="journal article" date="1981" name="Nature">
        <title>Nucleotide sequence and formation of the transforming gene of a mouse sarcoma virus.</title>
        <authorList>
            <person name="Van Beveren C."/>
            <person name="Galleshaw J.A."/>
            <person name="Jonas V."/>
            <person name="Berns A.J."/>
            <person name="Doolittle R.F."/>
            <person name="Donoghue D.J."/>
            <person name="Verma I.M."/>
        </authorList>
    </citation>
    <scope>NUCLEOTIDE SEQUENCE [GENOMIC DNA] OF 1-30; 46-131 AND 261-343</scope>
</reference>
<reference key="5">
    <citation type="journal article" date="1982" name="Nature">
        <title>Activation of a cellular oncogene by DNA rearrangement: possible involvement of an IS-like element.</title>
        <authorList>
            <person name="Rechavi G."/>
            <person name="Givol D."/>
            <person name="Canaani E."/>
        </authorList>
    </citation>
    <scope>NUCLEOTIDE SEQUENCE [GENOMIC DNA] OF 1-41</scope>
    <source>
        <strain>BALB/cJ</strain>
    </source>
</reference>
<reference key="6">
    <citation type="journal article" date="1983" name="J. Virol.">
        <title>Recombinational junctions of variants of Moloney murine sarcoma virus: generation and divergence of a mammalian transforming gene.</title>
        <authorList>
            <person name="Donoghue D.J."/>
            <person name="Hunter T."/>
        </authorList>
    </citation>
    <scope>NUCLEOTIDE SEQUENCE [GENOMIC DNA] OF 335-343</scope>
</reference>
<evidence type="ECO:0000250" key="1">
    <source>
        <dbReference type="UniProtKB" id="P00540"/>
    </source>
</evidence>
<evidence type="ECO:0000255" key="2">
    <source>
        <dbReference type="PROSITE-ProRule" id="PRU00159"/>
    </source>
</evidence>
<evidence type="ECO:0000255" key="3">
    <source>
        <dbReference type="PROSITE-ProRule" id="PRU10027"/>
    </source>
</evidence>
<evidence type="ECO:0000305" key="4"/>
<evidence type="ECO:0000312" key="5">
    <source>
        <dbReference type="MGI" id="MGI:97052"/>
    </source>
</evidence>
<proteinExistence type="evidence at transcript level"/>
<protein>
    <recommendedName>
        <fullName evidence="4">Proto-oncogene serine/threonine-protein kinase mos</fullName>
        <ecNumber>2.7.11.1</ecNumber>
    </recommendedName>
    <alternativeName>
        <fullName>Oocyte maturation factor mos</fullName>
    </alternativeName>
    <alternativeName>
        <fullName>Proto-oncogene c-Mos</fullName>
    </alternativeName>
</protein>
<name>MOS_MOUSE</name>